<protein>
    <recommendedName>
        <fullName evidence="1">HTH-type transcriptional regulator MntR</fullName>
    </recommendedName>
    <alternativeName>
        <fullName evidence="1">Manganese transport regulator</fullName>
    </alternativeName>
</protein>
<reference key="1">
    <citation type="journal article" date="2002" name="Nucleic Acids Res.">
        <title>Genome sequence of Oceanobacillus iheyensis isolated from the Iheya Ridge and its unexpected adaptive capabilities to extreme environments.</title>
        <authorList>
            <person name="Takami H."/>
            <person name="Takaki Y."/>
            <person name="Uchiyama I."/>
        </authorList>
    </citation>
    <scope>NUCLEOTIDE SEQUENCE [LARGE SCALE GENOMIC DNA]</scope>
    <source>
        <strain>DSM 14371 / CIP 107618 / JCM 11309 / KCTC 3954 / HTE831</strain>
    </source>
</reference>
<keyword id="KW-0010">Activator</keyword>
<keyword id="KW-0963">Cytoplasm</keyword>
<keyword id="KW-0238">DNA-binding</keyword>
<keyword id="KW-0464">Manganese</keyword>
<keyword id="KW-0479">Metal-binding</keyword>
<keyword id="KW-1185">Reference proteome</keyword>
<keyword id="KW-0678">Repressor</keyword>
<keyword id="KW-0804">Transcription</keyword>
<keyword id="KW-0805">Transcription regulation</keyword>
<sequence>MPTPSMEDYIEIIYNLIESKGYARVSAIAEALDVHPSSVTKMVQKLDKDQYLDYEKYRGFVLTSKGKKIGERLVFRHELLEEFLEIIGVNDENIYDDVEGIEHHLSWNSIDRIGDLVNYFKDDDSRVKDLKKVIKESDQQVNETAEK</sequence>
<organism>
    <name type="scientific">Oceanobacillus iheyensis (strain DSM 14371 / CIP 107618 / JCM 11309 / KCTC 3954 / HTE831)</name>
    <dbReference type="NCBI Taxonomy" id="221109"/>
    <lineage>
        <taxon>Bacteria</taxon>
        <taxon>Bacillati</taxon>
        <taxon>Bacillota</taxon>
        <taxon>Bacilli</taxon>
        <taxon>Bacillales</taxon>
        <taxon>Bacillaceae</taxon>
        <taxon>Oceanobacillus</taxon>
    </lineage>
</organism>
<accession>Q8EQ23</accession>
<dbReference type="EMBL" id="BA000028">
    <property type="protein sequence ID" value="BAC13856.1"/>
    <property type="molecule type" value="Genomic_DNA"/>
</dbReference>
<dbReference type="RefSeq" id="WP_011066297.1">
    <property type="nucleotide sequence ID" value="NC_004193.1"/>
</dbReference>
<dbReference type="SMR" id="Q8EQ23"/>
<dbReference type="STRING" id="221109.gene:10734140"/>
<dbReference type="KEGG" id="oih:OB1900"/>
<dbReference type="eggNOG" id="COG1321">
    <property type="taxonomic scope" value="Bacteria"/>
</dbReference>
<dbReference type="HOGENOM" id="CLU_069532_3_0_9"/>
<dbReference type="OrthoDB" id="9791355at2"/>
<dbReference type="PhylomeDB" id="Q8EQ23"/>
<dbReference type="Proteomes" id="UP000000822">
    <property type="component" value="Chromosome"/>
</dbReference>
<dbReference type="GO" id="GO:0005737">
    <property type="term" value="C:cytoplasm"/>
    <property type="evidence" value="ECO:0007669"/>
    <property type="project" value="UniProtKB-SubCell"/>
</dbReference>
<dbReference type="GO" id="GO:0003677">
    <property type="term" value="F:DNA binding"/>
    <property type="evidence" value="ECO:0007669"/>
    <property type="project" value="UniProtKB-KW"/>
</dbReference>
<dbReference type="GO" id="GO:0003700">
    <property type="term" value="F:DNA-binding transcription factor activity"/>
    <property type="evidence" value="ECO:0007669"/>
    <property type="project" value="UniProtKB-UniRule"/>
</dbReference>
<dbReference type="GO" id="GO:0030145">
    <property type="term" value="F:manganese ion binding"/>
    <property type="evidence" value="ECO:0007669"/>
    <property type="project" value="UniProtKB-UniRule"/>
</dbReference>
<dbReference type="GO" id="GO:0046983">
    <property type="term" value="F:protein dimerization activity"/>
    <property type="evidence" value="ECO:0007669"/>
    <property type="project" value="InterPro"/>
</dbReference>
<dbReference type="GO" id="GO:0030026">
    <property type="term" value="P:intracellular manganese ion homeostasis"/>
    <property type="evidence" value="ECO:0007669"/>
    <property type="project" value="UniProtKB-UniRule"/>
</dbReference>
<dbReference type="FunFam" id="1.10.10.10:FF:000189">
    <property type="entry name" value="HTH-type transcriptional regulator MntR"/>
    <property type="match status" value="1"/>
</dbReference>
<dbReference type="Gene3D" id="1.10.60.10">
    <property type="entry name" value="Iron dependent repressor, metal binding and dimerisation domain"/>
    <property type="match status" value="1"/>
</dbReference>
<dbReference type="Gene3D" id="1.10.10.10">
    <property type="entry name" value="Winged helix-like DNA-binding domain superfamily/Winged helix DNA-binding domain"/>
    <property type="match status" value="1"/>
</dbReference>
<dbReference type="HAMAP" id="MF_00732">
    <property type="entry name" value="HTH_MntR"/>
    <property type="match status" value="1"/>
</dbReference>
<dbReference type="InterPro" id="IPR050536">
    <property type="entry name" value="DtxR_MntR_Metal-Reg"/>
</dbReference>
<dbReference type="InterPro" id="IPR001367">
    <property type="entry name" value="Fe_dep_repressor"/>
</dbReference>
<dbReference type="InterPro" id="IPR036421">
    <property type="entry name" value="Fe_dep_repressor_sf"/>
</dbReference>
<dbReference type="InterPro" id="IPR022687">
    <property type="entry name" value="HTH_DTXR"/>
</dbReference>
<dbReference type="InterPro" id="IPR022897">
    <property type="entry name" value="HTH_tscrpt_reg_MntR"/>
</dbReference>
<dbReference type="InterPro" id="IPR022689">
    <property type="entry name" value="Iron_dep_repressor"/>
</dbReference>
<dbReference type="InterPro" id="IPR036388">
    <property type="entry name" value="WH-like_DNA-bd_sf"/>
</dbReference>
<dbReference type="InterPro" id="IPR036390">
    <property type="entry name" value="WH_DNA-bd_sf"/>
</dbReference>
<dbReference type="NCBIfam" id="NF003025">
    <property type="entry name" value="PRK03902.1"/>
    <property type="match status" value="1"/>
</dbReference>
<dbReference type="PANTHER" id="PTHR33238">
    <property type="entry name" value="IRON (METAL) DEPENDENT REPRESSOR, DTXR FAMILY"/>
    <property type="match status" value="1"/>
</dbReference>
<dbReference type="PANTHER" id="PTHR33238:SF11">
    <property type="entry name" value="TRANSCRIPTIONAL REGULATOR MNTR"/>
    <property type="match status" value="1"/>
</dbReference>
<dbReference type="Pfam" id="PF02742">
    <property type="entry name" value="Fe_dep_repr_C"/>
    <property type="match status" value="1"/>
</dbReference>
<dbReference type="Pfam" id="PF01325">
    <property type="entry name" value="Fe_dep_repress"/>
    <property type="match status" value="1"/>
</dbReference>
<dbReference type="SMART" id="SM00529">
    <property type="entry name" value="HTH_DTXR"/>
    <property type="match status" value="1"/>
</dbReference>
<dbReference type="SUPFAM" id="SSF47979">
    <property type="entry name" value="Iron-dependent repressor protein, dimerization domain"/>
    <property type="match status" value="1"/>
</dbReference>
<dbReference type="SUPFAM" id="SSF46785">
    <property type="entry name" value="Winged helix' DNA-binding domain"/>
    <property type="match status" value="1"/>
</dbReference>
<dbReference type="PROSITE" id="PS50944">
    <property type="entry name" value="HTH_DTXR"/>
    <property type="match status" value="1"/>
</dbReference>
<evidence type="ECO:0000255" key="1">
    <source>
        <dbReference type="HAMAP-Rule" id="MF_00732"/>
    </source>
</evidence>
<gene>
    <name evidence="1" type="primary">mntR</name>
    <name type="ordered locus">OB1900</name>
</gene>
<feature type="chain" id="PRO_0000201122" description="HTH-type transcriptional regulator MntR">
    <location>
        <begin position="1"/>
        <end position="147"/>
    </location>
</feature>
<feature type="domain" description="HTH dtxR-type" evidence="1">
    <location>
        <begin position="1"/>
        <end position="63"/>
    </location>
</feature>
<feature type="binding site" evidence="1">
    <location>
        <position position="8"/>
    </location>
    <ligand>
        <name>Mn(2+)</name>
        <dbReference type="ChEBI" id="CHEBI:29035"/>
        <label>1</label>
    </ligand>
</feature>
<feature type="binding site" evidence="1">
    <location>
        <position position="11"/>
    </location>
    <ligand>
        <name>Mn(2+)</name>
        <dbReference type="ChEBI" id="CHEBI:29035"/>
        <label>2</label>
    </ligand>
</feature>
<feature type="binding site" evidence="1">
    <location>
        <position position="77"/>
    </location>
    <ligand>
        <name>Mn(2+)</name>
        <dbReference type="ChEBI" id="CHEBI:29035"/>
        <label>2</label>
    </ligand>
</feature>
<feature type="binding site" evidence="1">
    <location>
        <position position="99"/>
    </location>
    <ligand>
        <name>Mn(2+)</name>
        <dbReference type="ChEBI" id="CHEBI:29035"/>
        <label>1</label>
    </ligand>
</feature>
<feature type="binding site" evidence="1">
    <location>
        <position position="99"/>
    </location>
    <ligand>
        <name>Mn(2+)</name>
        <dbReference type="ChEBI" id="CHEBI:29035"/>
        <label>2</label>
    </ligand>
</feature>
<feature type="binding site" evidence="1">
    <location>
        <position position="102"/>
    </location>
    <ligand>
        <name>Mn(2+)</name>
        <dbReference type="ChEBI" id="CHEBI:29035"/>
        <label>1</label>
    </ligand>
</feature>
<feature type="binding site" evidence="1">
    <location>
        <position position="102"/>
    </location>
    <ligand>
        <name>Mn(2+)</name>
        <dbReference type="ChEBI" id="CHEBI:29035"/>
        <label>2</label>
    </ligand>
</feature>
<feature type="binding site" evidence="1">
    <location>
        <position position="103"/>
    </location>
    <ligand>
        <name>Mn(2+)</name>
        <dbReference type="ChEBI" id="CHEBI:29035"/>
        <label>1</label>
    </ligand>
</feature>
<comment type="function">
    <text evidence="1">Central regulator of manganese homeostasis.</text>
</comment>
<comment type="activity regulation">
    <text evidence="1">DNA binding is strongly activated by Mn(2+).</text>
</comment>
<comment type="subunit">
    <text evidence="1">Homodimer.</text>
</comment>
<comment type="subcellular location">
    <subcellularLocation>
        <location evidence="1">Cytoplasm</location>
    </subcellularLocation>
</comment>
<comment type="similarity">
    <text evidence="1">Belongs to the DtxR/MntR family.</text>
</comment>
<name>MNTR_OCEIH</name>
<proteinExistence type="inferred from homology"/>